<proteinExistence type="inferred from homology"/>
<feature type="chain" id="PRO_1000203119" description="ATP phosphoribosyltransferase regulatory subunit">
    <location>
        <begin position="1"/>
        <end position="386"/>
    </location>
</feature>
<organism>
    <name type="scientific">Variovorax paradoxus (strain S110)</name>
    <dbReference type="NCBI Taxonomy" id="543728"/>
    <lineage>
        <taxon>Bacteria</taxon>
        <taxon>Pseudomonadati</taxon>
        <taxon>Pseudomonadota</taxon>
        <taxon>Betaproteobacteria</taxon>
        <taxon>Burkholderiales</taxon>
        <taxon>Comamonadaceae</taxon>
        <taxon>Variovorax</taxon>
    </lineage>
</organism>
<name>HISZ_VARPS</name>
<keyword id="KW-0028">Amino-acid biosynthesis</keyword>
<keyword id="KW-0963">Cytoplasm</keyword>
<keyword id="KW-0368">Histidine biosynthesis</keyword>
<comment type="function">
    <text evidence="1">Required for the first step of histidine biosynthesis. May allow the feedback regulation of ATP phosphoribosyltransferase activity by histidine.</text>
</comment>
<comment type="pathway">
    <text evidence="1">Amino-acid biosynthesis; L-histidine biosynthesis; L-histidine from 5-phospho-alpha-D-ribose 1-diphosphate: step 1/9.</text>
</comment>
<comment type="subunit">
    <text evidence="1">Heteromultimer composed of HisG and HisZ subunits.</text>
</comment>
<comment type="subcellular location">
    <subcellularLocation>
        <location evidence="1">Cytoplasm</location>
    </subcellularLocation>
</comment>
<comment type="miscellaneous">
    <text>This function is generally fulfilled by the C-terminal part of HisG, which is missing in some bacteria such as this one.</text>
</comment>
<comment type="similarity">
    <text evidence="1">Belongs to the class-II aminoacyl-tRNA synthetase family. HisZ subfamily.</text>
</comment>
<evidence type="ECO:0000255" key="1">
    <source>
        <dbReference type="HAMAP-Rule" id="MF_00125"/>
    </source>
</evidence>
<accession>C5CXH6</accession>
<sequence>MSAWVLPDHIADVLPSEARHIEELRRQLLDTARGYGYELVMPPLLEHLESLLSGTGEALDLQTFKLVDQLSGRSMGLRADTTPQVARIDAHLLNREGVARLCYCGPVLHTRPDRPHATREPLQFGAEIYGHAGLEADTEVLLLALDCLHASGLSDGVIVDLADARIVRALFAGVPVDAAVLARVHAALVAKDASELHALTRSFPAASRDGLRALVQLYGDASVLDEAAKALKGTPAVSAALAGLKQLAASLGADPARQISFDLADLRGYAYYSGMRFGIYVPGAADALVRGGRYDEVGAVFGRNRPAVGFSLDVRELVGVLPARPLRAAIRAPWSDAAGLREAIAGLRKAGEIVVCVLPGHGSEIDEFHCDRELVEHAGQWQVRAL</sequence>
<gene>
    <name evidence="1" type="primary">hisZ</name>
    <name type="ordered locus">Vapar_2197</name>
</gene>
<protein>
    <recommendedName>
        <fullName evidence="1">ATP phosphoribosyltransferase regulatory subunit</fullName>
    </recommendedName>
</protein>
<reference key="1">
    <citation type="journal article" date="2011" name="J. Bacteriol.">
        <title>Complete genome sequence of the metabolically versatile plant growth-promoting endophyte, Variovorax paradoxus S110.</title>
        <authorList>
            <person name="Han J.I."/>
            <person name="Choi H.K."/>
            <person name="Lee S.W."/>
            <person name="Orwin P.M."/>
            <person name="Kim J."/>
            <person name="Laroe S.L."/>
            <person name="Kim T.G."/>
            <person name="O'Neil J."/>
            <person name="Leadbetter J.R."/>
            <person name="Lee S.Y."/>
            <person name="Hur C.G."/>
            <person name="Spain J.C."/>
            <person name="Ovchinnikova G."/>
            <person name="Goodwin L."/>
            <person name="Han C."/>
        </authorList>
    </citation>
    <scope>NUCLEOTIDE SEQUENCE [LARGE SCALE GENOMIC DNA]</scope>
    <source>
        <strain>S110</strain>
    </source>
</reference>
<dbReference type="EMBL" id="CP001635">
    <property type="protein sequence ID" value="ACS18832.1"/>
    <property type="molecule type" value="Genomic_DNA"/>
</dbReference>
<dbReference type="SMR" id="C5CXH6"/>
<dbReference type="STRING" id="543728.Vapar_2197"/>
<dbReference type="KEGG" id="vap:Vapar_2197"/>
<dbReference type="eggNOG" id="COG3705">
    <property type="taxonomic scope" value="Bacteria"/>
</dbReference>
<dbReference type="HOGENOM" id="CLU_025113_0_1_4"/>
<dbReference type="OrthoDB" id="9769617at2"/>
<dbReference type="UniPathway" id="UPA00031">
    <property type="reaction ID" value="UER00006"/>
</dbReference>
<dbReference type="GO" id="GO:0005737">
    <property type="term" value="C:cytoplasm"/>
    <property type="evidence" value="ECO:0007669"/>
    <property type="project" value="UniProtKB-SubCell"/>
</dbReference>
<dbReference type="GO" id="GO:0004821">
    <property type="term" value="F:histidine-tRNA ligase activity"/>
    <property type="evidence" value="ECO:0007669"/>
    <property type="project" value="TreeGrafter"/>
</dbReference>
<dbReference type="GO" id="GO:0006427">
    <property type="term" value="P:histidyl-tRNA aminoacylation"/>
    <property type="evidence" value="ECO:0007669"/>
    <property type="project" value="TreeGrafter"/>
</dbReference>
<dbReference type="GO" id="GO:0000105">
    <property type="term" value="P:L-histidine biosynthetic process"/>
    <property type="evidence" value="ECO:0007669"/>
    <property type="project" value="UniProtKB-UniRule"/>
</dbReference>
<dbReference type="Gene3D" id="3.30.930.10">
    <property type="entry name" value="Bira Bifunctional Protein, Domain 2"/>
    <property type="match status" value="1"/>
</dbReference>
<dbReference type="HAMAP" id="MF_00125">
    <property type="entry name" value="HisZ"/>
    <property type="match status" value="1"/>
</dbReference>
<dbReference type="InterPro" id="IPR045864">
    <property type="entry name" value="aa-tRNA-synth_II/BPL/LPL"/>
</dbReference>
<dbReference type="InterPro" id="IPR041715">
    <property type="entry name" value="HisRS-like_core"/>
</dbReference>
<dbReference type="InterPro" id="IPR004516">
    <property type="entry name" value="HisRS/HisZ"/>
</dbReference>
<dbReference type="InterPro" id="IPR004517">
    <property type="entry name" value="HisZ"/>
</dbReference>
<dbReference type="NCBIfam" id="TIGR00443">
    <property type="entry name" value="hisZ_biosyn_reg"/>
    <property type="match status" value="1"/>
</dbReference>
<dbReference type="NCBIfam" id="NF008935">
    <property type="entry name" value="PRK12292.1-1"/>
    <property type="match status" value="1"/>
</dbReference>
<dbReference type="NCBIfam" id="NF009086">
    <property type="entry name" value="PRK12421.1"/>
    <property type="match status" value="1"/>
</dbReference>
<dbReference type="PANTHER" id="PTHR43707:SF1">
    <property type="entry name" value="HISTIDINE--TRNA LIGASE, MITOCHONDRIAL-RELATED"/>
    <property type="match status" value="1"/>
</dbReference>
<dbReference type="PANTHER" id="PTHR43707">
    <property type="entry name" value="HISTIDYL-TRNA SYNTHETASE"/>
    <property type="match status" value="1"/>
</dbReference>
<dbReference type="Pfam" id="PF13393">
    <property type="entry name" value="tRNA-synt_His"/>
    <property type="match status" value="1"/>
</dbReference>
<dbReference type="PIRSF" id="PIRSF001549">
    <property type="entry name" value="His-tRNA_synth"/>
    <property type="match status" value="1"/>
</dbReference>
<dbReference type="SUPFAM" id="SSF55681">
    <property type="entry name" value="Class II aaRS and biotin synthetases"/>
    <property type="match status" value="1"/>
</dbReference>